<protein>
    <recommendedName>
        <fullName evidence="1">Ribosome maturation factor RimP</fullName>
    </recommendedName>
</protein>
<feature type="chain" id="PRO_1000136775" description="Ribosome maturation factor RimP">
    <location>
        <begin position="1"/>
        <end position="162"/>
    </location>
</feature>
<gene>
    <name evidence="1" type="primary">rimP</name>
    <name type="ordered locus">LEPBI_I1523</name>
</gene>
<organism>
    <name type="scientific">Leptospira biflexa serovar Patoc (strain Patoc 1 / ATCC 23582 / Paris)</name>
    <dbReference type="NCBI Taxonomy" id="456481"/>
    <lineage>
        <taxon>Bacteria</taxon>
        <taxon>Pseudomonadati</taxon>
        <taxon>Spirochaetota</taxon>
        <taxon>Spirochaetia</taxon>
        <taxon>Leptospirales</taxon>
        <taxon>Leptospiraceae</taxon>
        <taxon>Leptospira</taxon>
    </lineage>
</organism>
<proteinExistence type="inferred from homology"/>
<reference key="1">
    <citation type="journal article" date="2008" name="PLoS ONE">
        <title>Genome sequence of the saprophyte Leptospira biflexa provides insights into the evolution of Leptospira and the pathogenesis of leptospirosis.</title>
        <authorList>
            <person name="Picardeau M."/>
            <person name="Bulach D.M."/>
            <person name="Bouchier C."/>
            <person name="Zuerner R.L."/>
            <person name="Zidane N."/>
            <person name="Wilson P.J."/>
            <person name="Creno S."/>
            <person name="Kuczek E.S."/>
            <person name="Bommezzadri S."/>
            <person name="Davis J.C."/>
            <person name="McGrath A."/>
            <person name="Johnson M.J."/>
            <person name="Boursaux-Eude C."/>
            <person name="Seemann T."/>
            <person name="Rouy Z."/>
            <person name="Coppel R.L."/>
            <person name="Rood J.I."/>
            <person name="Lajus A."/>
            <person name="Davies J.K."/>
            <person name="Medigue C."/>
            <person name="Adler B."/>
        </authorList>
    </citation>
    <scope>NUCLEOTIDE SEQUENCE [LARGE SCALE GENOMIC DNA]</scope>
    <source>
        <strain>Patoc 1 / ATCC 23582 / Paris</strain>
    </source>
</reference>
<comment type="function">
    <text evidence="1">Required for maturation of 30S ribosomal subunits.</text>
</comment>
<comment type="subcellular location">
    <subcellularLocation>
        <location evidence="1">Cytoplasm</location>
    </subcellularLocation>
</comment>
<comment type="similarity">
    <text evidence="1">Belongs to the RimP family.</text>
</comment>
<sequence length="162" mass="18688">MVYTEENIRELILRVLAPPLALFSLQVQNRKNHALIEIELDHLTDKTGSASLEDCETVSRRLKEELDQWGEEFDFTLQVSSAGAERVLRLPEDLIRFQGLLVKLEVPLESGKWDKRLYRLGPVSGDSVELTLYDRKTRHKKNQKSVSMPIAEIRKGNLYLEI</sequence>
<keyword id="KW-0963">Cytoplasm</keyword>
<keyword id="KW-1185">Reference proteome</keyword>
<keyword id="KW-0690">Ribosome biogenesis</keyword>
<dbReference type="EMBL" id="CP000786">
    <property type="protein sequence ID" value="ABZ97630.1"/>
    <property type="molecule type" value="Genomic_DNA"/>
</dbReference>
<dbReference type="RefSeq" id="WP_012388509.1">
    <property type="nucleotide sequence ID" value="NC_010602.1"/>
</dbReference>
<dbReference type="SMR" id="B0SQH2"/>
<dbReference type="STRING" id="456481.LEPBI_I1523"/>
<dbReference type="KEGG" id="lbi:LEPBI_I1523"/>
<dbReference type="HOGENOM" id="CLU_132594_0_0_12"/>
<dbReference type="BioCyc" id="LBIF456481:LEPBI_RS07495-MONOMER"/>
<dbReference type="Proteomes" id="UP000001847">
    <property type="component" value="Chromosome I"/>
</dbReference>
<dbReference type="GO" id="GO:0005829">
    <property type="term" value="C:cytosol"/>
    <property type="evidence" value="ECO:0007669"/>
    <property type="project" value="TreeGrafter"/>
</dbReference>
<dbReference type="GO" id="GO:0000028">
    <property type="term" value="P:ribosomal small subunit assembly"/>
    <property type="evidence" value="ECO:0007669"/>
    <property type="project" value="TreeGrafter"/>
</dbReference>
<dbReference type="GO" id="GO:0006412">
    <property type="term" value="P:translation"/>
    <property type="evidence" value="ECO:0007669"/>
    <property type="project" value="TreeGrafter"/>
</dbReference>
<dbReference type="Gene3D" id="3.30.300.70">
    <property type="entry name" value="RimP-like superfamily, N-terminal"/>
    <property type="match status" value="1"/>
</dbReference>
<dbReference type="HAMAP" id="MF_01077">
    <property type="entry name" value="RimP"/>
    <property type="match status" value="1"/>
</dbReference>
<dbReference type="InterPro" id="IPR003728">
    <property type="entry name" value="Ribosome_maturation_RimP"/>
</dbReference>
<dbReference type="InterPro" id="IPR028989">
    <property type="entry name" value="RimP_N"/>
</dbReference>
<dbReference type="InterPro" id="IPR035956">
    <property type="entry name" value="RimP_N_sf"/>
</dbReference>
<dbReference type="NCBIfam" id="NF011228">
    <property type="entry name" value="PRK14635.1"/>
    <property type="match status" value="1"/>
</dbReference>
<dbReference type="PANTHER" id="PTHR33867">
    <property type="entry name" value="RIBOSOME MATURATION FACTOR RIMP"/>
    <property type="match status" value="1"/>
</dbReference>
<dbReference type="PANTHER" id="PTHR33867:SF1">
    <property type="entry name" value="RIBOSOME MATURATION FACTOR RIMP"/>
    <property type="match status" value="1"/>
</dbReference>
<dbReference type="Pfam" id="PF02576">
    <property type="entry name" value="RimP_N"/>
    <property type="match status" value="1"/>
</dbReference>
<dbReference type="SUPFAM" id="SSF75420">
    <property type="entry name" value="YhbC-like, N-terminal domain"/>
    <property type="match status" value="1"/>
</dbReference>
<evidence type="ECO:0000255" key="1">
    <source>
        <dbReference type="HAMAP-Rule" id="MF_01077"/>
    </source>
</evidence>
<accession>B0SQH2</accession>
<name>RIMP_LEPBP</name>